<evidence type="ECO:0000255" key="1">
    <source>
        <dbReference type="HAMAP-Rule" id="MF_00147"/>
    </source>
</evidence>
<accession>B1IVG0</accession>
<sequence>MRHPLVMGNWKLNGSRHMVHELVSNLRKELAGVAGCAVAIAPPEMYIDMAKREAEGSHIMLGAQNVDLNLSGAFTGETSAAMLKDIGAQYIIIGHSERRTYHKESDELIAKKFAVLKEQGLTPVLCIGETEAENEAGKTEEVCARQIDAVLKTQGAAAFEGAVIAYEPVWAIGTGKSATPAQAQAVHKFIRDHIAKVDANIAEQVIIQYGGSVNASNAAELFAQPDIDGALVGGASLKADAFAVIVKAAEAAKQA</sequence>
<name>TPIS_ECOLC</name>
<gene>
    <name evidence="1" type="primary">tpiA</name>
    <name type="ordered locus">EcolC_4099</name>
</gene>
<comment type="function">
    <text evidence="1">Involved in the gluconeogenesis. Catalyzes stereospecifically the conversion of dihydroxyacetone phosphate (DHAP) to D-glyceraldehyde-3-phosphate (G3P).</text>
</comment>
<comment type="catalytic activity">
    <reaction evidence="1">
        <text>D-glyceraldehyde 3-phosphate = dihydroxyacetone phosphate</text>
        <dbReference type="Rhea" id="RHEA:18585"/>
        <dbReference type="ChEBI" id="CHEBI:57642"/>
        <dbReference type="ChEBI" id="CHEBI:59776"/>
        <dbReference type="EC" id="5.3.1.1"/>
    </reaction>
</comment>
<comment type="pathway">
    <text evidence="1">Carbohydrate biosynthesis; gluconeogenesis.</text>
</comment>
<comment type="pathway">
    <text evidence="1">Carbohydrate degradation; glycolysis; D-glyceraldehyde 3-phosphate from glycerone phosphate: step 1/1.</text>
</comment>
<comment type="subunit">
    <text evidence="1">Homodimer.</text>
</comment>
<comment type="subcellular location">
    <subcellularLocation>
        <location evidence="1">Cytoplasm</location>
    </subcellularLocation>
</comment>
<comment type="similarity">
    <text evidence="1">Belongs to the triosephosphate isomerase family.</text>
</comment>
<keyword id="KW-0963">Cytoplasm</keyword>
<keyword id="KW-0312">Gluconeogenesis</keyword>
<keyword id="KW-0324">Glycolysis</keyword>
<keyword id="KW-0413">Isomerase</keyword>
<protein>
    <recommendedName>
        <fullName evidence="1">Triosephosphate isomerase</fullName>
        <shortName evidence="1">TIM</shortName>
        <shortName evidence="1">TPI</shortName>
        <ecNumber evidence="1">5.3.1.1</ecNumber>
    </recommendedName>
    <alternativeName>
        <fullName evidence="1">Triose-phosphate isomerase</fullName>
    </alternativeName>
</protein>
<feature type="chain" id="PRO_1000076644" description="Triosephosphate isomerase">
    <location>
        <begin position="1"/>
        <end position="255"/>
    </location>
</feature>
<feature type="active site" description="Electrophile" evidence="1">
    <location>
        <position position="95"/>
    </location>
</feature>
<feature type="active site" description="Proton acceptor" evidence="1">
    <location>
        <position position="167"/>
    </location>
</feature>
<feature type="binding site" evidence="1">
    <location>
        <begin position="9"/>
        <end position="11"/>
    </location>
    <ligand>
        <name>substrate</name>
    </ligand>
</feature>
<feature type="binding site" evidence="1">
    <location>
        <position position="173"/>
    </location>
    <ligand>
        <name>substrate</name>
    </ligand>
</feature>
<feature type="binding site" evidence="1">
    <location>
        <position position="212"/>
    </location>
    <ligand>
        <name>substrate</name>
    </ligand>
</feature>
<feature type="binding site" evidence="1">
    <location>
        <begin position="233"/>
        <end position="234"/>
    </location>
    <ligand>
        <name>substrate</name>
    </ligand>
</feature>
<proteinExistence type="inferred from homology"/>
<reference key="1">
    <citation type="submission" date="2008-02" db="EMBL/GenBank/DDBJ databases">
        <title>Complete sequence of Escherichia coli C str. ATCC 8739.</title>
        <authorList>
            <person name="Copeland A."/>
            <person name="Lucas S."/>
            <person name="Lapidus A."/>
            <person name="Glavina del Rio T."/>
            <person name="Dalin E."/>
            <person name="Tice H."/>
            <person name="Bruce D."/>
            <person name="Goodwin L."/>
            <person name="Pitluck S."/>
            <person name="Kiss H."/>
            <person name="Brettin T."/>
            <person name="Detter J.C."/>
            <person name="Han C."/>
            <person name="Kuske C.R."/>
            <person name="Schmutz J."/>
            <person name="Larimer F."/>
            <person name="Land M."/>
            <person name="Hauser L."/>
            <person name="Kyrpides N."/>
            <person name="Mikhailova N."/>
            <person name="Ingram L."/>
            <person name="Richardson P."/>
        </authorList>
    </citation>
    <scope>NUCLEOTIDE SEQUENCE [LARGE SCALE GENOMIC DNA]</scope>
    <source>
        <strain>ATCC 8739 / DSM 1576 / NBRC 3972 / NCIMB 8545 / WDCM 00012 / Crooks</strain>
    </source>
</reference>
<dbReference type="EC" id="5.3.1.1" evidence="1"/>
<dbReference type="EMBL" id="CP000946">
    <property type="protein sequence ID" value="ACA79697.1"/>
    <property type="molecule type" value="Genomic_DNA"/>
</dbReference>
<dbReference type="RefSeq" id="WP_001216325.1">
    <property type="nucleotide sequence ID" value="NZ_MTFT01000008.1"/>
</dbReference>
<dbReference type="SMR" id="B1IVG0"/>
<dbReference type="GeneID" id="93777979"/>
<dbReference type="KEGG" id="ecl:EcolC_4099"/>
<dbReference type="HOGENOM" id="CLU_024251_2_1_6"/>
<dbReference type="UniPathway" id="UPA00109">
    <property type="reaction ID" value="UER00189"/>
</dbReference>
<dbReference type="UniPathway" id="UPA00138"/>
<dbReference type="GO" id="GO:0005829">
    <property type="term" value="C:cytosol"/>
    <property type="evidence" value="ECO:0007669"/>
    <property type="project" value="TreeGrafter"/>
</dbReference>
<dbReference type="GO" id="GO:0004807">
    <property type="term" value="F:triose-phosphate isomerase activity"/>
    <property type="evidence" value="ECO:0007669"/>
    <property type="project" value="UniProtKB-UniRule"/>
</dbReference>
<dbReference type="GO" id="GO:0006094">
    <property type="term" value="P:gluconeogenesis"/>
    <property type="evidence" value="ECO:0007669"/>
    <property type="project" value="UniProtKB-UniRule"/>
</dbReference>
<dbReference type="GO" id="GO:0046166">
    <property type="term" value="P:glyceraldehyde-3-phosphate biosynthetic process"/>
    <property type="evidence" value="ECO:0007669"/>
    <property type="project" value="TreeGrafter"/>
</dbReference>
<dbReference type="GO" id="GO:0019563">
    <property type="term" value="P:glycerol catabolic process"/>
    <property type="evidence" value="ECO:0007669"/>
    <property type="project" value="TreeGrafter"/>
</dbReference>
<dbReference type="GO" id="GO:0006096">
    <property type="term" value="P:glycolytic process"/>
    <property type="evidence" value="ECO:0007669"/>
    <property type="project" value="UniProtKB-UniRule"/>
</dbReference>
<dbReference type="CDD" id="cd00311">
    <property type="entry name" value="TIM"/>
    <property type="match status" value="1"/>
</dbReference>
<dbReference type="FunFam" id="3.20.20.70:FF:000020">
    <property type="entry name" value="Triosephosphate isomerase"/>
    <property type="match status" value="1"/>
</dbReference>
<dbReference type="Gene3D" id="3.20.20.70">
    <property type="entry name" value="Aldolase class I"/>
    <property type="match status" value="1"/>
</dbReference>
<dbReference type="HAMAP" id="MF_00147_B">
    <property type="entry name" value="TIM_B"/>
    <property type="match status" value="1"/>
</dbReference>
<dbReference type="InterPro" id="IPR013785">
    <property type="entry name" value="Aldolase_TIM"/>
</dbReference>
<dbReference type="InterPro" id="IPR035990">
    <property type="entry name" value="TIM_sf"/>
</dbReference>
<dbReference type="InterPro" id="IPR022896">
    <property type="entry name" value="TrioseP_Isoase_bac/euk"/>
</dbReference>
<dbReference type="InterPro" id="IPR000652">
    <property type="entry name" value="Triosephosphate_isomerase"/>
</dbReference>
<dbReference type="InterPro" id="IPR020861">
    <property type="entry name" value="Triosephosphate_isomerase_AS"/>
</dbReference>
<dbReference type="NCBIfam" id="TIGR00419">
    <property type="entry name" value="tim"/>
    <property type="match status" value="1"/>
</dbReference>
<dbReference type="PANTHER" id="PTHR21139">
    <property type="entry name" value="TRIOSEPHOSPHATE ISOMERASE"/>
    <property type="match status" value="1"/>
</dbReference>
<dbReference type="PANTHER" id="PTHR21139:SF42">
    <property type="entry name" value="TRIOSEPHOSPHATE ISOMERASE"/>
    <property type="match status" value="1"/>
</dbReference>
<dbReference type="Pfam" id="PF00121">
    <property type="entry name" value="TIM"/>
    <property type="match status" value="1"/>
</dbReference>
<dbReference type="SUPFAM" id="SSF51351">
    <property type="entry name" value="Triosephosphate isomerase (TIM)"/>
    <property type="match status" value="1"/>
</dbReference>
<dbReference type="PROSITE" id="PS00171">
    <property type="entry name" value="TIM_1"/>
    <property type="match status" value="1"/>
</dbReference>
<dbReference type="PROSITE" id="PS51440">
    <property type="entry name" value="TIM_2"/>
    <property type="match status" value="1"/>
</dbReference>
<organism>
    <name type="scientific">Escherichia coli (strain ATCC 8739 / DSM 1576 / NBRC 3972 / NCIMB 8545 / WDCM 00012 / Crooks)</name>
    <dbReference type="NCBI Taxonomy" id="481805"/>
    <lineage>
        <taxon>Bacteria</taxon>
        <taxon>Pseudomonadati</taxon>
        <taxon>Pseudomonadota</taxon>
        <taxon>Gammaproteobacteria</taxon>
        <taxon>Enterobacterales</taxon>
        <taxon>Enterobacteriaceae</taxon>
        <taxon>Escherichia</taxon>
    </lineage>
</organism>